<dbReference type="EMBL" id="AY626348">
    <property type="protein sequence ID" value="AAT41665.1"/>
    <property type="molecule type" value="mRNA"/>
</dbReference>
<dbReference type="RefSeq" id="NP_001001769.1">
    <property type="nucleotide sequence ID" value="NM_001001769.1"/>
</dbReference>
<dbReference type="SMR" id="Q6ITQ4"/>
<dbReference type="FunCoup" id="Q6ITQ4">
    <property type="interactions" value="337"/>
</dbReference>
<dbReference type="STRING" id="9823.ENSSSCP00000004061"/>
<dbReference type="PaxDb" id="9823-ENSSSCP00000004061"/>
<dbReference type="Ensembl" id="ENSSSCT00025031137.1">
    <property type="protein sequence ID" value="ENSSSCP00025013097.1"/>
    <property type="gene ID" value="ENSSSCG00025022966.1"/>
</dbReference>
<dbReference type="Ensembl" id="ENSSSCT00035048254.1">
    <property type="protein sequence ID" value="ENSSSCP00035019294.1"/>
    <property type="gene ID" value="ENSSSCG00035036413.1"/>
</dbReference>
<dbReference type="Ensembl" id="ENSSSCT00045042507.1">
    <property type="protein sequence ID" value="ENSSSCP00045029519.1"/>
    <property type="gene ID" value="ENSSSCG00045024957.1"/>
</dbReference>
<dbReference type="Ensembl" id="ENSSSCT00050082010.1">
    <property type="protein sequence ID" value="ENSSSCP00050035212.1"/>
    <property type="gene ID" value="ENSSSCG00050060196.1"/>
</dbReference>
<dbReference type="Ensembl" id="ENSSSCT00055029941.1">
    <property type="protein sequence ID" value="ENSSSCP00055023845.1"/>
    <property type="gene ID" value="ENSSSCG00055015211.1"/>
</dbReference>
<dbReference type="Ensembl" id="ENSSSCT00065051431.1">
    <property type="protein sequence ID" value="ENSSSCP00065022326.1"/>
    <property type="gene ID" value="ENSSSCG00065037667.1"/>
</dbReference>
<dbReference type="Ensembl" id="ENSSSCT00115037967">
    <property type="protein sequence ID" value="ENSSSCP00115035861"/>
    <property type="gene ID" value="ENSSSCG00115021436"/>
</dbReference>
<dbReference type="Ensembl" id="ENSSSCT00130006595">
    <property type="protein sequence ID" value="ENSSSCP00130004376"/>
    <property type="gene ID" value="ENSSSCG00130003555"/>
</dbReference>
<dbReference type="GeneID" id="414756"/>
<dbReference type="KEGG" id="ssc:414756"/>
<dbReference type="CTD" id="10158"/>
<dbReference type="eggNOG" id="ENOG502SAPW">
    <property type="taxonomic scope" value="Eukaryota"/>
</dbReference>
<dbReference type="InParanoid" id="Q6ITQ4"/>
<dbReference type="OrthoDB" id="9900654at2759"/>
<dbReference type="Proteomes" id="UP000008227">
    <property type="component" value="Unplaced"/>
</dbReference>
<dbReference type="Proteomes" id="UP000314985">
    <property type="component" value="Unplaced"/>
</dbReference>
<dbReference type="Proteomes" id="UP000694570">
    <property type="component" value="Unplaced"/>
</dbReference>
<dbReference type="Proteomes" id="UP000694571">
    <property type="component" value="Unplaced"/>
</dbReference>
<dbReference type="Proteomes" id="UP000694720">
    <property type="component" value="Unplaced"/>
</dbReference>
<dbReference type="Proteomes" id="UP000694722">
    <property type="component" value="Unplaced"/>
</dbReference>
<dbReference type="Proteomes" id="UP000694723">
    <property type="component" value="Unplaced"/>
</dbReference>
<dbReference type="Proteomes" id="UP000694724">
    <property type="component" value="Unplaced"/>
</dbReference>
<dbReference type="Proteomes" id="UP000694725">
    <property type="component" value="Unplaced"/>
</dbReference>
<dbReference type="Proteomes" id="UP000694726">
    <property type="component" value="Unplaced"/>
</dbReference>
<dbReference type="Proteomes" id="UP000694727">
    <property type="component" value="Unplaced"/>
</dbReference>
<dbReference type="Proteomes" id="UP000694728">
    <property type="component" value="Unplaced"/>
</dbReference>
<dbReference type="GO" id="GO:0016324">
    <property type="term" value="C:apical plasma membrane"/>
    <property type="evidence" value="ECO:0007669"/>
    <property type="project" value="UniProtKB-SubCell"/>
</dbReference>
<dbReference type="InterPro" id="IPR031627">
    <property type="entry name" value="PDZK1IP1/SMIM24"/>
</dbReference>
<dbReference type="PANTHER" id="PTHR15296">
    <property type="entry name" value="MEMBRANE-ASSOCIATED PROTEIN MAP17"/>
    <property type="match status" value="1"/>
</dbReference>
<dbReference type="PANTHER" id="PTHR15296:SF0">
    <property type="entry name" value="PDZK1-INTERACTING PROTEIN 1"/>
    <property type="match status" value="1"/>
</dbReference>
<dbReference type="Pfam" id="PF15807">
    <property type="entry name" value="MAP17"/>
    <property type="match status" value="1"/>
</dbReference>
<evidence type="ECO:0000250" key="1">
    <source>
        <dbReference type="UniProtKB" id="Q13113"/>
    </source>
</evidence>
<evidence type="ECO:0000250" key="2">
    <source>
        <dbReference type="UniProtKB" id="Q9CQH0"/>
    </source>
</evidence>
<evidence type="ECO:0000256" key="3">
    <source>
        <dbReference type="SAM" id="MobiDB-lite"/>
    </source>
</evidence>
<evidence type="ECO:0000305" key="4"/>
<keyword id="KW-1003">Cell membrane</keyword>
<keyword id="KW-0472">Membrane</keyword>
<keyword id="KW-0597">Phosphoprotein</keyword>
<keyword id="KW-1185">Reference proteome</keyword>
<keyword id="KW-0812">Transmembrane</keyword>
<keyword id="KW-1133">Transmembrane helix</keyword>
<name>PDZ1I_PIG</name>
<accession>Q6ITQ4</accession>
<gene>
    <name evidence="1" type="primary">PDZK1IP1</name>
    <name evidence="1" type="synonym">MAP17</name>
</gene>
<proteinExistence type="inferred from homology"/>
<protein>
    <recommendedName>
        <fullName>PDZK1-interacting protein 1</fullName>
    </recommendedName>
    <alternativeName>
        <fullName>17 kDa membrane-associated protein</fullName>
    </alternativeName>
</protein>
<reference key="1">
    <citation type="submission" date="2004-05" db="EMBL/GenBank/DDBJ databases">
        <title>Pig MAP17 cloned from LLC-PK1 cells.</title>
        <authorList>
            <person name="Carrodeguas J.A."/>
            <person name="Catalan J."/>
            <person name="Sorribas V."/>
        </authorList>
    </citation>
    <scope>NUCLEOTIDE SEQUENCE [MRNA]</scope>
    <source>
        <tissue>Kidney</tissue>
    </source>
</reference>
<sequence>MSALSLVILGLLMAVPPASCQQGLGNLQPWMQGLIAVAVFLVLVAIAFAINHFWCQEEREPMNMVMTTGNKADGILIGTEGKYSSMAASFRSNEHENAYENTSEEEGRVHSTPM</sequence>
<comment type="function">
    <text evidence="1">Auxiliary protein of electrogenic Na(+)-coupled sugar symporter SLC5A2/SGLT2 and SLC5A1/SGLT1 (By similarity). Essential for the transporter activity of SLC5A2/SGLT2 but not SLC5A1/SGLT1 (By similarity).</text>
</comment>
<comment type="subunit">
    <text evidence="1">Forms a heterodimer (via N-terminal transmembrane helix) with SLC5A2/SGLT2 (via TM13); this interaction enhances SLC5A2 transporter activity (By similarity). Interacts with PDZK1 (By similarity).</text>
</comment>
<comment type="subcellular location">
    <subcellularLocation>
        <location evidence="1">Apical cell membrane</location>
        <topology evidence="1">Single-pass membrane protein</topology>
    </subcellularLocation>
</comment>
<comment type="similarity">
    <text evidence="4">Belongs to the PDZK1-interacting protein 1/SMIM24 family.</text>
</comment>
<organism>
    <name type="scientific">Sus scrofa</name>
    <name type="common">Pig</name>
    <dbReference type="NCBI Taxonomy" id="9823"/>
    <lineage>
        <taxon>Eukaryota</taxon>
        <taxon>Metazoa</taxon>
        <taxon>Chordata</taxon>
        <taxon>Craniata</taxon>
        <taxon>Vertebrata</taxon>
        <taxon>Euteleostomi</taxon>
        <taxon>Mammalia</taxon>
        <taxon>Eutheria</taxon>
        <taxon>Laurasiatheria</taxon>
        <taxon>Artiodactyla</taxon>
        <taxon>Suina</taxon>
        <taxon>Suidae</taxon>
        <taxon>Sus</taxon>
    </lineage>
</organism>
<feature type="chain" id="PRO_0000058284" description="PDZK1-interacting protein 1">
    <location>
        <begin position="1"/>
        <end position="114"/>
    </location>
</feature>
<feature type="topological domain" description="Extracellular" evidence="1">
    <location>
        <begin position="1"/>
        <end position="28"/>
    </location>
</feature>
<feature type="transmembrane region" description="Helical" evidence="1">
    <location>
        <begin position="29"/>
        <end position="51"/>
    </location>
</feature>
<feature type="topological domain" description="Cytoplasmic" evidence="1">
    <location>
        <begin position="52"/>
        <end position="114"/>
    </location>
</feature>
<feature type="region of interest" description="Disordered" evidence="3">
    <location>
        <begin position="92"/>
        <end position="114"/>
    </location>
</feature>
<feature type="compositionally biased region" description="Basic and acidic residues" evidence="3">
    <location>
        <begin position="105"/>
        <end position="114"/>
    </location>
</feature>
<feature type="modified residue" description="Phosphoserine" evidence="2">
    <location>
        <position position="85"/>
    </location>
</feature>